<feature type="transit peptide" description="Chloroplast" evidence="1">
    <location>
        <begin position="1"/>
        <end position="62"/>
    </location>
</feature>
<feature type="chain" id="PRO_0000430738" description="Homogentisate geranylgeranyltransferase" evidence="1">
    <location>
        <begin position="63"/>
        <end position="408"/>
    </location>
</feature>
<feature type="transmembrane region" description="Helical; Name=1" evidence="1">
    <location>
        <begin position="122"/>
        <end position="142"/>
    </location>
</feature>
<feature type="transmembrane region" description="Helical; Name=2" evidence="1">
    <location>
        <begin position="156"/>
        <end position="176"/>
    </location>
</feature>
<feature type="transmembrane region" description="Helical; Name=3" evidence="1">
    <location>
        <begin position="194"/>
        <end position="214"/>
    </location>
</feature>
<feature type="transmembrane region" description="Helical; Name=4" evidence="1">
    <location>
        <begin position="221"/>
        <end position="241"/>
    </location>
</feature>
<feature type="transmembrane region" description="Helical; Name=5" evidence="1">
    <location>
        <begin position="248"/>
        <end position="268"/>
    </location>
</feature>
<feature type="transmembrane region" description="Helical; Name=6" evidence="1">
    <location>
        <begin position="286"/>
        <end position="306"/>
    </location>
</feature>
<feature type="transmembrane region" description="Helical; Name=7" evidence="1">
    <location>
        <begin position="329"/>
        <end position="349"/>
    </location>
</feature>
<feature type="transmembrane region" description="Helical; Name=8" evidence="1">
    <location>
        <begin position="352"/>
        <end position="372"/>
    </location>
</feature>
<feature type="transmembrane region" description="Helical; Name=9" evidence="1">
    <location>
        <begin position="386"/>
        <end position="406"/>
    </location>
</feature>
<gene>
    <name evidence="4" type="primary">HGGT</name>
</gene>
<protein>
    <recommendedName>
        <fullName evidence="4">Homogentisate geranylgeranyltransferase</fullName>
        <shortName evidence="4">HGGT</shortName>
        <ecNumber evidence="3">2.5.1.116</ecNumber>
    </recommendedName>
</protein>
<reference key="1">
    <citation type="journal article" date="2003" name="Nat. Biotechnol.">
        <title>Metabolic redesign of vitamin E biosynthesis in plants for tocotrienol production and increased antioxidant content.</title>
        <authorList>
            <person name="Cahoon E.B."/>
            <person name="Hall S.E."/>
            <person name="Ripp K.G."/>
            <person name="Ganzke T.S."/>
            <person name="Hitz W.D."/>
            <person name="Coughlan S.J."/>
        </authorList>
    </citation>
    <scope>NUCLEOTIDE SEQUENCE [MRNA]</scope>
    <scope>FUNCTION</scope>
    <scope>TISSUE SPECIFICITY</scope>
</reference>
<reference key="2">
    <citation type="journal article" date="2011" name="Plant J.">
        <title>Vitamin E biosynthesis: functional characterization of the monocot homogentisate geranylgeranyl transferase.</title>
        <authorList>
            <person name="Yang W."/>
            <person name="Cahoon R.E."/>
            <person name="Hunter S.C."/>
            <person name="Zhang C."/>
            <person name="Han J."/>
            <person name="Borgschulte T."/>
            <person name="Cahoon E.B."/>
        </authorList>
    </citation>
    <scope>FUNCTION</scope>
    <scope>CATALYTIC ACTIVITY</scope>
    <scope>BIOPHYSICOCHEMICAL PROPERTIES</scope>
    <scope>SUBCELLULAR LOCATION</scope>
</reference>
<proteinExistence type="evidence at protein level"/>
<accession>Q7XB14</accession>
<comment type="function">
    <text evidence="2 3">Involved in the synthesis of tocotrienol (vitamin E). Catalyzes the condensation of homogentisate and geranylgeranyl diphosphate to form 2-methyl-6-geranylgeranylbenzoquinol (PubMed:12897790, PubMed:21223386). Possesses low activity with phytyl diphosphate as substrate (PubMed:21223386).</text>
</comment>
<comment type="catalytic activity">
    <reaction evidence="3">
        <text>homogentisate + (2E,6E,10E)-geranylgeranyl diphosphate + H(+) = 6-geranylgeranyl-2-methylbenzene-1,4-diol + CO2 + diphosphate</text>
        <dbReference type="Rhea" id="RHEA:38003"/>
        <dbReference type="ChEBI" id="CHEBI:15378"/>
        <dbReference type="ChEBI" id="CHEBI:16169"/>
        <dbReference type="ChEBI" id="CHEBI:16526"/>
        <dbReference type="ChEBI" id="CHEBI:33019"/>
        <dbReference type="ChEBI" id="CHEBI:58756"/>
        <dbReference type="ChEBI" id="CHEBI:75411"/>
        <dbReference type="EC" id="2.5.1.116"/>
    </reaction>
</comment>
<comment type="biophysicochemical properties">
    <kinetics>
        <KM evidence="3">0.14 uM for geranylgeranyl diphosphate</KM>
        <KM evidence="3">0.4 uM for phytyl diphosphate</KM>
        <Vmax evidence="3">0.43 pmol/min/mg enzyme toward geranylgeranyl diphosphate</Vmax>
        <Vmax evidence="3">0.06 pmol/min/mg enzyme toward phytyl diphosphate</Vmax>
    </kinetics>
</comment>
<comment type="pathway">
    <text evidence="5">Cofactor biosynthesis; tocopherol biosynthesis.</text>
</comment>
<comment type="subcellular location">
    <subcellularLocation>
        <location evidence="3">Plastid</location>
        <location evidence="3">Chloroplast membrane</location>
        <topology evidence="1">Multi-pass membrane protein</topology>
    </subcellularLocation>
</comment>
<comment type="tissue specificity">
    <text evidence="2">Expressed in seeds.</text>
</comment>
<comment type="miscellaneous">
    <text evidence="4">Seeds of most monocots are enriched in tocotrienols and contain only small amounts of tocopherols.</text>
</comment>
<comment type="similarity">
    <text evidence="5">Belongs to the UbiA prenyltransferase family.</text>
</comment>
<keyword id="KW-0150">Chloroplast</keyword>
<keyword id="KW-0472">Membrane</keyword>
<keyword id="KW-0934">Plastid</keyword>
<keyword id="KW-0808">Transferase</keyword>
<keyword id="KW-0809">Transit peptide</keyword>
<keyword id="KW-0812">Transmembrane</keyword>
<keyword id="KW-1133">Transmembrane helix</keyword>
<sequence length="408" mass="45092">MQAVTAAAAAGQLLTDTRRGPRCRARLGTTRLSWTGRFAVEAFAGQCQSSATTVMHKFSAISQAARPRRNTKRQCSDDYPALQAGCSEVNWDQNGSNANRLEEIRGDVLKKLRSFYEFCRPHTIFGTIIGITSVSLLPMKSIDDFTVTVLRGYLEALTAALCMNIYVVGLNQLYDIQIDKINKPGLPLASGEFSVATGVFLVLAFLIMSFSIGIRSGSAPLMCALIVSFLLGSAYSIEAPFLRWKRHALLAASCILFVRAILVQLAFFAHMQQHVLKRPLAATKSLVFATLFMCCFSAVIALFKDIPDVDGDRDFGIQSLSVRLGPQRVYQLCISILLTAYGAATLVGASSTNLFQKIITVSGHGLLALTLWQRAQHFEVENQARVTSFYMFIWKLFYAEYFLIPFVQ</sequence>
<organism evidence="6">
    <name type="scientific">Hordeum vulgare</name>
    <name type="common">Barley</name>
    <dbReference type="NCBI Taxonomy" id="4513"/>
    <lineage>
        <taxon>Eukaryota</taxon>
        <taxon>Viridiplantae</taxon>
        <taxon>Streptophyta</taxon>
        <taxon>Embryophyta</taxon>
        <taxon>Tracheophyta</taxon>
        <taxon>Spermatophyta</taxon>
        <taxon>Magnoliopsida</taxon>
        <taxon>Liliopsida</taxon>
        <taxon>Poales</taxon>
        <taxon>Poaceae</taxon>
        <taxon>BOP clade</taxon>
        <taxon>Pooideae</taxon>
        <taxon>Triticodae</taxon>
        <taxon>Triticeae</taxon>
        <taxon>Hordeinae</taxon>
        <taxon>Hordeum</taxon>
    </lineage>
</organism>
<evidence type="ECO:0000255" key="1"/>
<evidence type="ECO:0000269" key="2">
    <source>
    </source>
</evidence>
<evidence type="ECO:0000269" key="3">
    <source>
    </source>
</evidence>
<evidence type="ECO:0000303" key="4">
    <source>
    </source>
</evidence>
<evidence type="ECO:0000305" key="5"/>
<evidence type="ECO:0000312" key="6">
    <source>
        <dbReference type="EMBL" id="AAP43911.1"/>
    </source>
</evidence>
<dbReference type="EC" id="2.5.1.116" evidence="3"/>
<dbReference type="EMBL" id="AY222860">
    <property type="protein sequence ID" value="AAP43911.1"/>
    <property type="molecule type" value="mRNA"/>
</dbReference>
<dbReference type="SMR" id="Q7XB14"/>
<dbReference type="OMA" id="VENKAWI"/>
<dbReference type="BioCyc" id="MetaCyc:MONOMER-18465"/>
<dbReference type="BRENDA" id="2.5.1.116">
    <property type="organism ID" value="2687"/>
</dbReference>
<dbReference type="SABIO-RK" id="Q7XB14"/>
<dbReference type="UniPathway" id="UPA00160"/>
<dbReference type="ExpressionAtlas" id="Q7XB14">
    <property type="expression patterns" value="baseline and differential"/>
</dbReference>
<dbReference type="GO" id="GO:0031969">
    <property type="term" value="C:chloroplast membrane"/>
    <property type="evidence" value="ECO:0007669"/>
    <property type="project" value="UniProtKB-SubCell"/>
</dbReference>
<dbReference type="GO" id="GO:0010356">
    <property type="term" value="F:homogentisate geranylgeranyltransferase activity"/>
    <property type="evidence" value="ECO:0007669"/>
    <property type="project" value="UniProtKB-EC"/>
</dbReference>
<dbReference type="GO" id="GO:0010189">
    <property type="term" value="P:vitamin E biosynthetic process"/>
    <property type="evidence" value="ECO:0007669"/>
    <property type="project" value="UniProtKB-UniPathway"/>
</dbReference>
<dbReference type="CDD" id="cd13960">
    <property type="entry name" value="PT_UbiA_HPT1"/>
    <property type="match status" value="1"/>
</dbReference>
<dbReference type="FunFam" id="1.10.357.140:FF:000011">
    <property type="entry name" value="Homogentisate phytyltransferase 1"/>
    <property type="match status" value="1"/>
</dbReference>
<dbReference type="Gene3D" id="1.10.357.140">
    <property type="entry name" value="UbiA prenyltransferase"/>
    <property type="match status" value="1"/>
</dbReference>
<dbReference type="InterPro" id="IPR044502">
    <property type="entry name" value="AtHST-like"/>
</dbReference>
<dbReference type="InterPro" id="IPR000537">
    <property type="entry name" value="UbiA_prenyltransferase"/>
</dbReference>
<dbReference type="InterPro" id="IPR044878">
    <property type="entry name" value="UbiA_sf"/>
</dbReference>
<dbReference type="NCBIfam" id="NF009525">
    <property type="entry name" value="PRK12887.1"/>
    <property type="match status" value="1"/>
</dbReference>
<dbReference type="PANTHER" id="PTHR43009:SF7">
    <property type="entry name" value="HOMOGENTISATE GERANYLGERANYLTRANSFERASE, CHLOROPLASTIC"/>
    <property type="match status" value="1"/>
</dbReference>
<dbReference type="PANTHER" id="PTHR43009">
    <property type="entry name" value="HOMOGENTISATE SOLANESYLTRANSFERASE, CHLOROPLASTIC"/>
    <property type="match status" value="1"/>
</dbReference>
<dbReference type="Pfam" id="PF01040">
    <property type="entry name" value="UbiA"/>
    <property type="match status" value="1"/>
</dbReference>
<name>HGGT_HORVU</name>